<sequence>MFTSKLLTLVLVVQPGRVLLGMKKRGFGAGKWNGFGGKVQTGETIEQAARRELLEESGLTVDTLHKIGNIKFEFIGETELMDVHIFRADNYEGEPAESDEMRPQWFDIDKIPFSQMWADDILWFPLMLQKKRFLGYFKFQGHDVIVEHKLDEVEDL</sequence>
<accession>Q7ZWC3</accession>
<name>8ODP_DANRE</name>
<organism>
    <name type="scientific">Danio rerio</name>
    <name type="common">Zebrafish</name>
    <name type="synonym">Brachydanio rerio</name>
    <dbReference type="NCBI Taxonomy" id="7955"/>
    <lineage>
        <taxon>Eukaryota</taxon>
        <taxon>Metazoa</taxon>
        <taxon>Chordata</taxon>
        <taxon>Craniata</taxon>
        <taxon>Vertebrata</taxon>
        <taxon>Euteleostomi</taxon>
        <taxon>Actinopterygii</taxon>
        <taxon>Neopterygii</taxon>
        <taxon>Teleostei</taxon>
        <taxon>Ostariophysi</taxon>
        <taxon>Cypriniformes</taxon>
        <taxon>Danionidae</taxon>
        <taxon>Danioninae</taxon>
        <taxon>Danio</taxon>
    </lineage>
</organism>
<proteinExistence type="evidence at protein level"/>
<feature type="chain" id="PRO_5015098920" description="Oxidized purine nucleoside triphosphate hydrolase" evidence="2">
    <location>
        <begin position="1"/>
        <end position="156"/>
    </location>
</feature>
<feature type="domain" description="Nudix hydrolase" evidence="3">
    <location>
        <begin position="3"/>
        <end position="132"/>
    </location>
</feature>
<feature type="short sequence motif" description="Nudix box" evidence="3">
    <location>
        <begin position="37"/>
        <end position="58"/>
    </location>
</feature>
<feature type="binding site" evidence="1">
    <location>
        <position position="8"/>
    </location>
    <ligand>
        <name>2-oxo-dATP</name>
        <dbReference type="ChEBI" id="CHEBI:77897"/>
    </ligand>
</feature>
<feature type="binding site" evidence="5 11">
    <location>
        <position position="8"/>
    </location>
    <ligand>
        <name>O(6)-methyl-dGMP</name>
        <dbReference type="ChEBI" id="CHEBI:169975"/>
    </ligand>
</feature>
<feature type="binding site" evidence="1">
    <location>
        <position position="23"/>
    </location>
    <ligand>
        <name>8-oxo-dGTP</name>
        <dbReference type="ChEBI" id="CHEBI:77896"/>
    </ligand>
</feature>
<feature type="binding site" evidence="5 11">
    <location>
        <position position="23"/>
    </location>
    <ligand>
        <name>O(6)-methyl-dGMP</name>
        <dbReference type="ChEBI" id="CHEBI:169975"/>
    </ligand>
</feature>
<feature type="binding site" evidence="1">
    <location>
        <position position="33"/>
    </location>
    <ligand>
        <name>2-oxo-dATP</name>
        <dbReference type="ChEBI" id="CHEBI:77897"/>
    </ligand>
</feature>
<feature type="binding site" evidence="5 11">
    <location>
        <position position="33"/>
    </location>
    <ligand>
        <name>O(6)-methyl-dGMP</name>
        <dbReference type="ChEBI" id="CHEBI:169975"/>
    </ligand>
</feature>
<feature type="binding site" evidence="1">
    <location>
        <begin position="35"/>
        <end position="38"/>
    </location>
    <ligand>
        <name>2-oxo-dATP</name>
        <dbReference type="ChEBI" id="CHEBI:77897"/>
    </ligand>
</feature>
<feature type="binding site" evidence="5 11">
    <location>
        <begin position="35"/>
        <end position="38"/>
    </location>
    <ligand>
        <name>O(6)-methyl-dGMP</name>
        <dbReference type="ChEBI" id="CHEBI:169975"/>
    </ligand>
</feature>
<feature type="binding site" evidence="5 11">
    <location>
        <position position="36"/>
    </location>
    <ligand>
        <name>Mg(2+)</name>
        <dbReference type="ChEBI" id="CHEBI:18420"/>
        <label>1</label>
    </ligand>
</feature>
<feature type="binding site" evidence="5 11">
    <location>
        <position position="52"/>
    </location>
    <ligand>
        <name>Mg(2+)</name>
        <dbReference type="ChEBI" id="CHEBI:18420"/>
        <label>2</label>
    </ligand>
</feature>
<feature type="binding site" evidence="5 11">
    <location>
        <position position="55"/>
    </location>
    <ligand>
        <name>Mg(2+)</name>
        <dbReference type="ChEBI" id="CHEBI:18420"/>
        <label>2</label>
    </ligand>
</feature>
<feature type="binding site" evidence="5 11">
    <location>
        <position position="56"/>
    </location>
    <ligand>
        <name>Mg(2+)</name>
        <dbReference type="ChEBI" id="CHEBI:18420"/>
        <label>1</label>
    </ligand>
</feature>
<feature type="binding site" evidence="5 11">
    <location>
        <position position="100"/>
    </location>
    <ligand>
        <name>Mg(2+)</name>
        <dbReference type="ChEBI" id="CHEBI:18420"/>
        <label>1</label>
    </ligand>
</feature>
<feature type="binding site" evidence="1">
    <location>
        <begin position="117"/>
        <end position="120"/>
    </location>
    <ligand>
        <name>2-oxo-dATP</name>
        <dbReference type="ChEBI" id="CHEBI:77897"/>
    </ligand>
</feature>
<feature type="binding site" evidence="5 11">
    <location>
        <begin position="117"/>
        <end position="120"/>
    </location>
    <ligand>
        <name>O(6)-methyl-dGMP</name>
        <dbReference type="ChEBI" id="CHEBI:169975"/>
    </ligand>
</feature>
<feature type="strand" evidence="13">
    <location>
        <begin position="3"/>
        <end position="14"/>
    </location>
</feature>
<feature type="strand" evidence="13">
    <location>
        <begin position="17"/>
        <end position="23"/>
    </location>
</feature>
<feature type="turn" evidence="13">
    <location>
        <begin position="27"/>
        <end position="30"/>
    </location>
</feature>
<feature type="strand" evidence="13">
    <location>
        <begin position="31"/>
        <end position="33"/>
    </location>
</feature>
<feature type="strand" evidence="12">
    <location>
        <begin position="35"/>
        <end position="38"/>
    </location>
</feature>
<feature type="helix" evidence="13">
    <location>
        <begin position="45"/>
        <end position="57"/>
    </location>
</feature>
<feature type="strand" evidence="13">
    <location>
        <begin position="65"/>
        <end position="74"/>
    </location>
</feature>
<feature type="strand" evidence="13">
    <location>
        <begin position="79"/>
        <end position="90"/>
    </location>
</feature>
<feature type="strand" evidence="13">
    <location>
        <begin position="99"/>
        <end position="107"/>
    </location>
</feature>
<feature type="helix" evidence="13">
    <location>
        <begin position="108"/>
        <end position="110"/>
    </location>
</feature>
<feature type="helix" evidence="13">
    <location>
        <begin position="113"/>
        <end position="115"/>
    </location>
</feature>
<feature type="helix" evidence="13">
    <location>
        <begin position="120"/>
        <end position="128"/>
    </location>
</feature>
<feature type="strand" evidence="13">
    <location>
        <begin position="132"/>
        <end position="140"/>
    </location>
</feature>
<feature type="turn" evidence="13">
    <location>
        <begin position="141"/>
        <end position="143"/>
    </location>
</feature>
<feature type="strand" evidence="13">
    <location>
        <begin position="144"/>
        <end position="154"/>
    </location>
</feature>
<comment type="function">
    <text evidence="4 5 6">Oxidized purine nucleoside triphosphate hydrolase which is a prominent sanitizer of the oxidized nucleotide pool (PubMed:26862114, PubMed:30304478). Catalyzes the hydrolysis of 2-oxo-dATP (2-hydroxy-dATP) into 2-oxo-dAMP (PubMed:26862114). Also has a significant hydrolase activity toward 2-oxo-ATP, 8-oxo-dGTP and 8-oxo-dATP (PubMed:26862114, PubMed:30304478). Through the hydrolysis of oxidized purine nucleoside triphosphates, prevents their incorporation into DNA and the subsequent transversions A:T to C:G and G:C to T:A (PubMed:26862114, PubMed:30304478). Also catalyzes the hydrolysis of methylated purine nucleoside triphosphate preventing their integration into DNA (PubMed:30304478, PubMed:32144205). Through this antimutagenic activity protects cells from oxidative stress (PubMed:26862114, PubMed:30304478, PubMed:32144205).</text>
</comment>
<comment type="catalytic activity">
    <reaction evidence="4">
        <text>2-oxo-dATP + H2O = 2-oxo-dAMP + diphosphate + H(+)</text>
        <dbReference type="Rhea" id="RHEA:31583"/>
        <dbReference type="ChEBI" id="CHEBI:15377"/>
        <dbReference type="ChEBI" id="CHEBI:15378"/>
        <dbReference type="ChEBI" id="CHEBI:33019"/>
        <dbReference type="ChEBI" id="CHEBI:63212"/>
        <dbReference type="ChEBI" id="CHEBI:77897"/>
        <dbReference type="EC" id="3.6.1.56"/>
    </reaction>
    <physiologicalReaction direction="left-to-right" evidence="8">
        <dbReference type="Rhea" id="RHEA:31584"/>
    </physiologicalReaction>
</comment>
<comment type="catalytic activity">
    <reaction evidence="1">
        <text>2-oxo-ATP + H2O = 2-oxo-AMP + diphosphate + H(+)</text>
        <dbReference type="Rhea" id="RHEA:67392"/>
        <dbReference type="ChEBI" id="CHEBI:15377"/>
        <dbReference type="ChEBI" id="CHEBI:15378"/>
        <dbReference type="ChEBI" id="CHEBI:33019"/>
        <dbReference type="ChEBI" id="CHEBI:71395"/>
        <dbReference type="ChEBI" id="CHEBI:172878"/>
    </reaction>
    <physiologicalReaction direction="left-to-right" evidence="1">
        <dbReference type="Rhea" id="RHEA:67393"/>
    </physiologicalReaction>
</comment>
<comment type="catalytic activity">
    <reaction evidence="4">
        <text>8-oxo-dGTP + H2O = 8-oxo-dGMP + diphosphate + H(+)</text>
        <dbReference type="Rhea" id="RHEA:31575"/>
        <dbReference type="ChEBI" id="CHEBI:15377"/>
        <dbReference type="ChEBI" id="CHEBI:15378"/>
        <dbReference type="ChEBI" id="CHEBI:33019"/>
        <dbReference type="ChEBI" id="CHEBI:63224"/>
        <dbReference type="ChEBI" id="CHEBI:77896"/>
    </reaction>
    <physiologicalReaction direction="left-to-right" evidence="8">
        <dbReference type="Rhea" id="RHEA:31576"/>
    </physiologicalReaction>
</comment>
<comment type="catalytic activity">
    <reaction evidence="5">
        <text>8-oxo-dATP + H2O = 8-oxo-dAMP + diphosphate + H(+)</text>
        <dbReference type="Rhea" id="RHEA:65396"/>
        <dbReference type="ChEBI" id="CHEBI:15377"/>
        <dbReference type="ChEBI" id="CHEBI:15378"/>
        <dbReference type="ChEBI" id="CHEBI:33019"/>
        <dbReference type="ChEBI" id="CHEBI:71361"/>
        <dbReference type="ChEBI" id="CHEBI:172871"/>
    </reaction>
    <physiologicalReaction direction="left-to-right" evidence="9">
        <dbReference type="Rhea" id="RHEA:65397"/>
    </physiologicalReaction>
</comment>
<comment type="catalytic activity">
    <reaction evidence="5">
        <text>O(6)-methyl-dGTP + H2O = O(6)-methyl-dGMP + diphosphate + H(+)</text>
        <dbReference type="Rhea" id="RHEA:67600"/>
        <dbReference type="ChEBI" id="CHEBI:15377"/>
        <dbReference type="ChEBI" id="CHEBI:15378"/>
        <dbReference type="ChEBI" id="CHEBI:33019"/>
        <dbReference type="ChEBI" id="CHEBI:169974"/>
        <dbReference type="ChEBI" id="CHEBI:169975"/>
    </reaction>
    <physiologicalReaction direction="left-to-right" evidence="9">
        <dbReference type="Rhea" id="RHEA:67601"/>
    </physiologicalReaction>
</comment>
<comment type="catalytic activity">
    <reaction evidence="6">
        <text>N(6)-methyl-dATP + H2O = N(6)-methyl-dAMP + diphosphate + H(+)</text>
        <dbReference type="Rhea" id="RHEA:67604"/>
        <dbReference type="ChEBI" id="CHEBI:15377"/>
        <dbReference type="ChEBI" id="CHEBI:15378"/>
        <dbReference type="ChEBI" id="CHEBI:33019"/>
        <dbReference type="ChEBI" id="CHEBI:169976"/>
        <dbReference type="ChEBI" id="CHEBI:172872"/>
    </reaction>
    <physiologicalReaction direction="left-to-right" evidence="6">
        <dbReference type="Rhea" id="RHEA:67605"/>
    </physiologicalReaction>
</comment>
<comment type="catalytic activity">
    <reaction evidence="1">
        <text>N(6)-methyl-ATP + H2O = N(6)-methyl-AMP + diphosphate + H(+)</text>
        <dbReference type="Rhea" id="RHEA:67608"/>
        <dbReference type="ChEBI" id="CHEBI:15377"/>
        <dbReference type="ChEBI" id="CHEBI:15378"/>
        <dbReference type="ChEBI" id="CHEBI:33019"/>
        <dbReference type="ChEBI" id="CHEBI:144842"/>
        <dbReference type="ChEBI" id="CHEBI:172873"/>
    </reaction>
    <physiologicalReaction direction="left-to-right" evidence="1">
        <dbReference type="Rhea" id="RHEA:67609"/>
    </physiologicalReaction>
</comment>
<comment type="cofactor">
    <cofactor evidence="5 11">
        <name>Mg(2+)</name>
        <dbReference type="ChEBI" id="CHEBI:18420"/>
    </cofactor>
    <text evidence="5 11">Binds 2 Mg(2+) ion per subunit.</text>
</comment>
<comment type="activity regulation">
    <text evidence="4">Inhibited by TH588.</text>
</comment>
<comment type="biophysicochemical properties">
    <kinetics>
        <KM evidence="4">3.9 uM for 8-oxo-dGTP (at pH 7.5)</KM>
        <KM evidence="4">6.1 uM for 2-oxo-dATP (at pH 7.5)</KM>
        <KM evidence="4">91.4 uM for dGTP (at pH 7.5)</KM>
        <text evidence="4">kcat is 5.4 sec(-1) with 8-oxo-dGTP as substrate (at pH 7.5) (PubMed:26862114). kcat is 12.0 sec(-1) with 2-oxo-dATP as substrate (at pH 7.5) (PubMed:26862114). kcat is 7.6 sec(-1) with dGTP as substrate (at pH 7.5) (PubMed:26862114). Shows the best catalytic efficiency for the 8-oxo-dGTP substrate (PubMed:26862114).</text>
    </kinetics>
</comment>
<comment type="subunit">
    <text evidence="1">Monomer.</text>
</comment>
<comment type="subcellular location">
    <subcellularLocation>
        <location evidence="1">Cytoplasm</location>
        <location evidence="1">Cytosol</location>
    </subcellularLocation>
    <subcellularLocation>
        <location evidence="1">Mitochondrion matrix</location>
    </subcellularLocation>
    <subcellularLocation>
        <location evidence="1">Nucleus</location>
    </subcellularLocation>
</comment>
<comment type="similarity">
    <text evidence="7">Belongs to the Nudix hydrolase family.</text>
</comment>
<keyword id="KW-0002">3D-structure</keyword>
<keyword id="KW-0963">Cytoplasm</keyword>
<keyword id="KW-0378">Hydrolase</keyword>
<keyword id="KW-0460">Magnesium</keyword>
<keyword id="KW-0479">Metal-binding</keyword>
<keyword id="KW-0496">Mitochondrion</keyword>
<keyword id="KW-0539">Nucleus</keyword>
<keyword id="KW-1185">Reference proteome</keyword>
<keyword id="KW-0694">RNA-binding</keyword>
<keyword id="KW-0809">Transit peptide</keyword>
<gene>
    <name type="primary">nudt1</name>
</gene>
<evidence type="ECO:0000250" key="1">
    <source>
        <dbReference type="UniProtKB" id="P36639"/>
    </source>
</evidence>
<evidence type="ECO:0000255" key="2"/>
<evidence type="ECO:0000255" key="3">
    <source>
        <dbReference type="PROSITE-ProRule" id="PRU00794"/>
    </source>
</evidence>
<evidence type="ECO:0000269" key="4">
    <source>
    </source>
</evidence>
<evidence type="ECO:0000269" key="5">
    <source>
    </source>
</evidence>
<evidence type="ECO:0000269" key="6">
    <source>
    </source>
</evidence>
<evidence type="ECO:0000305" key="7"/>
<evidence type="ECO:0000305" key="8">
    <source>
    </source>
</evidence>
<evidence type="ECO:0000305" key="9">
    <source>
    </source>
</evidence>
<evidence type="ECO:0007744" key="10">
    <source>
        <dbReference type="PDB" id="5HZX"/>
    </source>
</evidence>
<evidence type="ECO:0007744" key="11">
    <source>
        <dbReference type="PDB" id="5OTN"/>
    </source>
</evidence>
<evidence type="ECO:0007829" key="12">
    <source>
        <dbReference type="PDB" id="5HZX"/>
    </source>
</evidence>
<evidence type="ECO:0007829" key="13">
    <source>
        <dbReference type="PDB" id="5OTN"/>
    </source>
</evidence>
<dbReference type="EC" id="3.6.1.56" evidence="1"/>
<dbReference type="EC" id="3.6.1.-" evidence="1"/>
<dbReference type="EMBL" id="BX510926">
    <property type="status" value="NOT_ANNOTATED_CDS"/>
    <property type="molecule type" value="Genomic_DNA"/>
</dbReference>
<dbReference type="EMBL" id="BC049486">
    <property type="protein sequence ID" value="AAH49486.1"/>
    <property type="molecule type" value="mRNA"/>
</dbReference>
<dbReference type="RefSeq" id="NP_998583.1">
    <property type="nucleotide sequence ID" value="NM_213418.1"/>
</dbReference>
<dbReference type="PDB" id="5HZX">
    <property type="method" value="X-ray"/>
    <property type="resolution" value="1.90 A"/>
    <property type="chains" value="A/B=1-156"/>
</dbReference>
<dbReference type="PDB" id="5OTN">
    <property type="method" value="X-ray"/>
    <property type="resolution" value="0.99 A"/>
    <property type="chains" value="A=1-156"/>
</dbReference>
<dbReference type="PDBsum" id="5HZX"/>
<dbReference type="PDBsum" id="5OTN"/>
<dbReference type="SMR" id="Q7ZWC3"/>
<dbReference type="FunCoup" id="Q7ZWC3">
    <property type="interactions" value="138"/>
</dbReference>
<dbReference type="STRING" id="7955.ENSDARP00000040752"/>
<dbReference type="PaxDb" id="7955-ENSDARP00000040752"/>
<dbReference type="Ensembl" id="ENSDART00000040753">
    <property type="protein sequence ID" value="ENSDARP00000040752"/>
    <property type="gene ID" value="ENSDARG00000030573"/>
</dbReference>
<dbReference type="GeneID" id="406727"/>
<dbReference type="KEGG" id="dre:406727"/>
<dbReference type="AGR" id="ZFIN:ZDB-GENE-040426-2757"/>
<dbReference type="CTD" id="4521"/>
<dbReference type="ZFIN" id="ZDB-GENE-040426-2757">
    <property type="gene designation" value="nudt1"/>
</dbReference>
<dbReference type="eggNOG" id="ENOG502S254">
    <property type="taxonomic scope" value="Eukaryota"/>
</dbReference>
<dbReference type="HOGENOM" id="CLU_037162_11_1_1"/>
<dbReference type="InParanoid" id="Q7ZWC3"/>
<dbReference type="OMA" id="MIEATLC"/>
<dbReference type="OrthoDB" id="408303at2759"/>
<dbReference type="PhylomeDB" id="Q7ZWC3"/>
<dbReference type="TreeFam" id="TF106348"/>
<dbReference type="Reactome" id="R-DRE-2393930">
    <property type="pathway name" value="Phosphate bond hydrolysis by NUDT proteins"/>
</dbReference>
<dbReference type="PRO" id="PR:Q7ZWC3"/>
<dbReference type="Proteomes" id="UP000000437">
    <property type="component" value="Chromosome 3"/>
</dbReference>
<dbReference type="Bgee" id="ENSDARG00000030573">
    <property type="expression patterns" value="Expressed in testis and 26 other cell types or tissues"/>
</dbReference>
<dbReference type="GO" id="GO:0005737">
    <property type="term" value="C:cytoplasm"/>
    <property type="evidence" value="ECO:0000318"/>
    <property type="project" value="GO_Central"/>
</dbReference>
<dbReference type="GO" id="GO:0005829">
    <property type="term" value="C:cytosol"/>
    <property type="evidence" value="ECO:0007669"/>
    <property type="project" value="UniProtKB-SubCell"/>
</dbReference>
<dbReference type="GO" id="GO:0005759">
    <property type="term" value="C:mitochondrial matrix"/>
    <property type="evidence" value="ECO:0007669"/>
    <property type="project" value="UniProtKB-SubCell"/>
</dbReference>
<dbReference type="GO" id="GO:0005634">
    <property type="term" value="C:nucleus"/>
    <property type="evidence" value="ECO:0007669"/>
    <property type="project" value="UniProtKB-SubCell"/>
</dbReference>
<dbReference type="GO" id="GO:0008413">
    <property type="term" value="F:8-oxo-7,8-dihydroguanosine triphosphate pyrophosphatase activity"/>
    <property type="evidence" value="ECO:0000318"/>
    <property type="project" value="GO_Central"/>
</dbReference>
<dbReference type="GO" id="GO:0016818">
    <property type="term" value="F:hydrolase activity, acting on acid anhydrides, in phosphorus-containing anhydrides"/>
    <property type="evidence" value="ECO:0000314"/>
    <property type="project" value="ZFIN"/>
</dbReference>
<dbReference type="GO" id="GO:0046872">
    <property type="term" value="F:metal ion binding"/>
    <property type="evidence" value="ECO:0007669"/>
    <property type="project" value="UniProtKB-KW"/>
</dbReference>
<dbReference type="GO" id="GO:0047429">
    <property type="term" value="F:nucleoside triphosphate diphosphatase activity"/>
    <property type="evidence" value="ECO:0000314"/>
    <property type="project" value="ZFIN"/>
</dbReference>
<dbReference type="GO" id="GO:0016791">
    <property type="term" value="F:phosphatase activity"/>
    <property type="evidence" value="ECO:0000314"/>
    <property type="project" value="ZFIN"/>
</dbReference>
<dbReference type="GO" id="GO:0003723">
    <property type="term" value="F:RNA binding"/>
    <property type="evidence" value="ECO:0007669"/>
    <property type="project" value="UniProtKB-KW"/>
</dbReference>
<dbReference type="GO" id="GO:0042262">
    <property type="term" value="P:DNA protection"/>
    <property type="evidence" value="ECO:0000318"/>
    <property type="project" value="GO_Central"/>
</dbReference>
<dbReference type="GO" id="GO:0009151">
    <property type="term" value="P:purine deoxyribonucleotide metabolic process"/>
    <property type="evidence" value="ECO:0000314"/>
    <property type="project" value="ZFIN"/>
</dbReference>
<dbReference type="CDD" id="cd03427">
    <property type="entry name" value="NUDIX_MTH1_Nudt1"/>
    <property type="match status" value="1"/>
</dbReference>
<dbReference type="FunFam" id="3.90.79.10:FF:000043">
    <property type="entry name" value="7,8-dihydro-8-oxoguanine triphosphatase"/>
    <property type="match status" value="1"/>
</dbReference>
<dbReference type="Gene3D" id="3.90.79.10">
    <property type="entry name" value="Nucleoside Triphosphate Pyrophosphohydrolase"/>
    <property type="match status" value="1"/>
</dbReference>
<dbReference type="InterPro" id="IPR003563">
    <property type="entry name" value="8ODP"/>
</dbReference>
<dbReference type="InterPro" id="IPR020476">
    <property type="entry name" value="Nudix_hydrolase"/>
</dbReference>
<dbReference type="InterPro" id="IPR015797">
    <property type="entry name" value="NUDIX_hydrolase-like_dom_sf"/>
</dbReference>
<dbReference type="InterPro" id="IPR020084">
    <property type="entry name" value="NUDIX_hydrolase_CS"/>
</dbReference>
<dbReference type="InterPro" id="IPR000086">
    <property type="entry name" value="NUDIX_hydrolase_dom"/>
</dbReference>
<dbReference type="PANTHER" id="PTHR43758">
    <property type="entry name" value="7,8-DIHYDRO-8-OXOGUANINE TRIPHOSPHATASE"/>
    <property type="match status" value="1"/>
</dbReference>
<dbReference type="PANTHER" id="PTHR43758:SF2">
    <property type="entry name" value="OXIDIZED PURINE NUCLEOSIDE TRIPHOSPHATE HYDROLASE"/>
    <property type="match status" value="1"/>
</dbReference>
<dbReference type="Pfam" id="PF00293">
    <property type="entry name" value="NUDIX"/>
    <property type="match status" value="1"/>
</dbReference>
<dbReference type="PRINTS" id="PR01403">
    <property type="entry name" value="8OXTPHPHTASE"/>
</dbReference>
<dbReference type="PRINTS" id="PR00502">
    <property type="entry name" value="NUDIXFAMILY"/>
</dbReference>
<dbReference type="SUPFAM" id="SSF55811">
    <property type="entry name" value="Nudix"/>
    <property type="match status" value="1"/>
</dbReference>
<dbReference type="PROSITE" id="PS51462">
    <property type="entry name" value="NUDIX"/>
    <property type="match status" value="1"/>
</dbReference>
<dbReference type="PROSITE" id="PS00893">
    <property type="entry name" value="NUDIX_BOX"/>
    <property type="match status" value="1"/>
</dbReference>
<protein>
    <recommendedName>
        <fullName>Oxidized purine nucleoside triphosphate hydrolase</fullName>
        <ecNumber evidence="1">3.6.1.56</ecNumber>
    </recommendedName>
    <alternativeName>
        <fullName>2-hydroxy-dATP diphosphatase</fullName>
    </alternativeName>
    <alternativeName>
        <fullName>7,8-dihydro-8-oxoguanine triphosphatase</fullName>
    </alternativeName>
    <alternativeName>
        <fullName>8-oxo-dGTPase</fullName>
    </alternativeName>
    <alternativeName>
        <fullName evidence="1">Methylated purine nucleoside triphosphate hydrolase</fullName>
        <ecNumber evidence="1">3.6.1.-</ecNumber>
    </alternativeName>
    <alternativeName>
        <fullName>Nucleoside diphosphate-linked moiety X motif 1</fullName>
        <shortName>Nudix motif 1</shortName>
    </alternativeName>
</protein>
<reference key="1">
    <citation type="journal article" date="2013" name="Nature">
        <title>The zebrafish reference genome sequence and its relationship to the human genome.</title>
        <authorList>
            <person name="Howe K."/>
            <person name="Clark M.D."/>
            <person name="Torroja C.F."/>
            <person name="Torrance J."/>
            <person name="Berthelot C."/>
            <person name="Muffato M."/>
            <person name="Collins J.E."/>
            <person name="Humphray S."/>
            <person name="McLaren K."/>
            <person name="Matthews L."/>
            <person name="McLaren S."/>
            <person name="Sealy I."/>
            <person name="Caccamo M."/>
            <person name="Churcher C."/>
            <person name="Scott C."/>
            <person name="Barrett J.C."/>
            <person name="Koch R."/>
            <person name="Rauch G.J."/>
            <person name="White S."/>
            <person name="Chow W."/>
            <person name="Kilian B."/>
            <person name="Quintais L.T."/>
            <person name="Guerra-Assuncao J.A."/>
            <person name="Zhou Y."/>
            <person name="Gu Y."/>
            <person name="Yen J."/>
            <person name="Vogel J.H."/>
            <person name="Eyre T."/>
            <person name="Redmond S."/>
            <person name="Banerjee R."/>
            <person name="Chi J."/>
            <person name="Fu B."/>
            <person name="Langley E."/>
            <person name="Maguire S.F."/>
            <person name="Laird G.K."/>
            <person name="Lloyd D."/>
            <person name="Kenyon E."/>
            <person name="Donaldson S."/>
            <person name="Sehra H."/>
            <person name="Almeida-King J."/>
            <person name="Loveland J."/>
            <person name="Trevanion S."/>
            <person name="Jones M."/>
            <person name="Quail M."/>
            <person name="Willey D."/>
            <person name="Hunt A."/>
            <person name="Burton J."/>
            <person name="Sims S."/>
            <person name="McLay K."/>
            <person name="Plumb B."/>
            <person name="Davis J."/>
            <person name="Clee C."/>
            <person name="Oliver K."/>
            <person name="Clark R."/>
            <person name="Riddle C."/>
            <person name="Elliot D."/>
            <person name="Threadgold G."/>
            <person name="Harden G."/>
            <person name="Ware D."/>
            <person name="Begum S."/>
            <person name="Mortimore B."/>
            <person name="Kerry G."/>
            <person name="Heath P."/>
            <person name="Phillimore B."/>
            <person name="Tracey A."/>
            <person name="Corby N."/>
            <person name="Dunn M."/>
            <person name="Johnson C."/>
            <person name="Wood J."/>
            <person name="Clark S."/>
            <person name="Pelan S."/>
            <person name="Griffiths G."/>
            <person name="Smith M."/>
            <person name="Glithero R."/>
            <person name="Howden P."/>
            <person name="Barker N."/>
            <person name="Lloyd C."/>
            <person name="Stevens C."/>
            <person name="Harley J."/>
            <person name="Holt K."/>
            <person name="Panagiotidis G."/>
            <person name="Lovell J."/>
            <person name="Beasley H."/>
            <person name="Henderson C."/>
            <person name="Gordon D."/>
            <person name="Auger K."/>
            <person name="Wright D."/>
            <person name="Collins J."/>
            <person name="Raisen C."/>
            <person name="Dyer L."/>
            <person name="Leung K."/>
            <person name="Robertson L."/>
            <person name="Ambridge K."/>
            <person name="Leongamornlert D."/>
            <person name="McGuire S."/>
            <person name="Gilderthorp R."/>
            <person name="Griffiths C."/>
            <person name="Manthravadi D."/>
            <person name="Nichol S."/>
            <person name="Barker G."/>
            <person name="Whitehead S."/>
            <person name="Kay M."/>
            <person name="Brown J."/>
            <person name="Murnane C."/>
            <person name="Gray E."/>
            <person name="Humphries M."/>
            <person name="Sycamore N."/>
            <person name="Barker D."/>
            <person name="Saunders D."/>
            <person name="Wallis J."/>
            <person name="Babbage A."/>
            <person name="Hammond S."/>
            <person name="Mashreghi-Mohammadi M."/>
            <person name="Barr L."/>
            <person name="Martin S."/>
            <person name="Wray P."/>
            <person name="Ellington A."/>
            <person name="Matthews N."/>
            <person name="Ellwood M."/>
            <person name="Woodmansey R."/>
            <person name="Clark G."/>
            <person name="Cooper J."/>
            <person name="Tromans A."/>
            <person name="Grafham D."/>
            <person name="Skuce C."/>
            <person name="Pandian R."/>
            <person name="Andrews R."/>
            <person name="Harrison E."/>
            <person name="Kimberley A."/>
            <person name="Garnett J."/>
            <person name="Fosker N."/>
            <person name="Hall R."/>
            <person name="Garner P."/>
            <person name="Kelly D."/>
            <person name="Bird C."/>
            <person name="Palmer S."/>
            <person name="Gehring I."/>
            <person name="Berger A."/>
            <person name="Dooley C.M."/>
            <person name="Ersan-Urun Z."/>
            <person name="Eser C."/>
            <person name="Geiger H."/>
            <person name="Geisler M."/>
            <person name="Karotki L."/>
            <person name="Kirn A."/>
            <person name="Konantz J."/>
            <person name="Konantz M."/>
            <person name="Oberlander M."/>
            <person name="Rudolph-Geiger S."/>
            <person name="Teucke M."/>
            <person name="Lanz C."/>
            <person name="Raddatz G."/>
            <person name="Osoegawa K."/>
            <person name="Zhu B."/>
            <person name="Rapp A."/>
            <person name="Widaa S."/>
            <person name="Langford C."/>
            <person name="Yang F."/>
            <person name="Schuster S.C."/>
            <person name="Carter N.P."/>
            <person name="Harrow J."/>
            <person name="Ning Z."/>
            <person name="Herrero J."/>
            <person name="Searle S.M."/>
            <person name="Enright A."/>
            <person name="Geisler R."/>
            <person name="Plasterk R.H."/>
            <person name="Lee C."/>
            <person name="Westerfield M."/>
            <person name="de Jong P.J."/>
            <person name="Zon L.I."/>
            <person name="Postlethwait J.H."/>
            <person name="Nusslein-Volhard C."/>
            <person name="Hubbard T.J."/>
            <person name="Roest Crollius H."/>
            <person name="Rogers J."/>
            <person name="Stemple D.L."/>
        </authorList>
    </citation>
    <scope>NUCLEOTIDE SEQUENCE [LARGE SCALE GENOMIC DNA]</scope>
    <source>
        <strain>Tuebingen</strain>
    </source>
</reference>
<reference key="2">
    <citation type="submission" date="2003-03" db="EMBL/GenBank/DDBJ databases">
        <authorList>
            <consortium name="NIH - Zebrafish Gene Collection (ZGC) project"/>
        </authorList>
    </citation>
    <scope>NUCLEOTIDE SEQUENCE [LARGE SCALE MRNA]</scope>
    <source>
        <tissue>Embryo</tissue>
    </source>
</reference>
<reference key="3">
    <citation type="journal article" date="2020" name="J. Biol. Chem.">
        <title>MutT homologue 1 (MTH1) removes N6-methyl-dATP from the dNTP pool.</title>
        <authorList>
            <person name="Scaletti E.R."/>
            <person name="Vallin K.S."/>
            <person name="Braeutigam L."/>
            <person name="Sarno A."/>
            <person name="Warpman Berglund U."/>
            <person name="Helleday T."/>
            <person name="Stenmark P."/>
            <person name="Jemth A.S."/>
        </authorList>
    </citation>
    <scope>FUNCTION</scope>
    <scope>CATALYTIC ACTIVITY</scope>
</reference>
<reference evidence="10" key="4">
    <citation type="journal article" date="2016" name="Cancer Res.">
        <title>Hypoxic Signaling and the Cellular Redox Tumor Environment Determine Sensitivity to MTH1 Inhibition.</title>
        <authorList>
            <person name="Brautigam L."/>
            <person name="Pudelko L."/>
            <person name="Jemth A.S."/>
            <person name="Gad H."/>
            <person name="Narwal M."/>
            <person name="Gustafsson R."/>
            <person name="Karsten S."/>
            <person name="Carreras-Puigvert J."/>
            <person name="Homan E."/>
            <person name="Berndt C."/>
            <person name="Warpman Berglund U."/>
            <person name="Stenmark P."/>
            <person name="Helleday T."/>
        </authorList>
    </citation>
    <scope>X-RAY CRYSTALLOGRAPHY (1.90 ANGSTROMS) IN COMPLEX WITH INHIBITOR</scope>
    <scope>FUNCTION</scope>
    <scope>CATALYTIC ACTIVITY</scope>
    <scope>BIOPHYSICOCHEMICAL PROPERTIES</scope>
    <scope>ACTIVITY REGULATION</scope>
</reference>
<reference evidence="11" key="5">
    <citation type="journal article" date="2018" name="Nucleic Acids Res.">
        <title>MutT homologue 1 (MTH1) catalyzes the hydrolysis of mutagenic O6-methyl-dGTP.</title>
        <authorList>
            <person name="Jemth A.S."/>
            <person name="Gustafsson R."/>
            <person name="Braeutigam L."/>
            <person name="Henriksson L."/>
            <person name="Vallin K.S.A."/>
            <person name="Sarno A."/>
            <person name="Almloef I."/>
            <person name="Homan E."/>
            <person name="Rasti A."/>
            <person name="Warpman Berglund U."/>
            <person name="Stenmark P."/>
            <person name="Helleday T."/>
        </authorList>
    </citation>
    <scope>X-RAY CRYSTALLOGRAPHY (0.99 ANGSTROMS) IN COMPLEX WITH O(6)-METHYL-DGMP AND COFACTOR</scope>
    <scope>FUNCTION</scope>
    <scope>CATALYTIC ACTIVITY</scope>
    <scope>REGION</scope>
</reference>